<sequence length="96" mass="10755">LQDAEDSSRFDADDTLAGEARELSTPKXHSEGTFSNDYSKYLETRRAQDFVQWLKNSXXXXXXXXHADGTFTSDVSSYLNDQAIKDFVAKLKSGKV</sequence>
<gene>
    <name type="primary">gcg</name>
</gene>
<accession>P09686</accession>
<organism>
    <name type="scientific">Myoxocephalus scorpius</name>
    <name type="common">Shorthorn sculpin</name>
    <name type="synonym">Cottus scorpius</name>
    <dbReference type="NCBI Taxonomy" id="8097"/>
    <lineage>
        <taxon>Eukaryota</taxon>
        <taxon>Metazoa</taxon>
        <taxon>Chordata</taxon>
        <taxon>Craniata</taxon>
        <taxon>Vertebrata</taxon>
        <taxon>Euteleostomi</taxon>
        <taxon>Actinopterygii</taxon>
        <taxon>Neopterygii</taxon>
        <taxon>Teleostei</taxon>
        <taxon>Neoteleostei</taxon>
        <taxon>Acanthomorphata</taxon>
        <taxon>Eupercaria</taxon>
        <taxon>Perciformes</taxon>
        <taxon>Cottioidei</taxon>
        <taxon>Cottales</taxon>
        <taxon>Cottidae</taxon>
        <taxon>Myoxocephalus</taxon>
    </lineage>
</organism>
<protein>
    <recommendedName>
        <fullName>Pro-glucagon</fullName>
    </recommendedName>
    <component>
        <recommendedName>
            <fullName>Glicentin-related polypeptide</fullName>
            <shortName>GRPP</shortName>
        </recommendedName>
    </component>
    <component>
        <recommendedName>
            <fullName>Glucagon</fullName>
        </recommendedName>
    </component>
    <component>
        <recommendedName>
            <fullName>Glucagon-like peptide</fullName>
        </recommendedName>
    </component>
</protein>
<comment type="function">
    <molecule>Glucagon</molecule>
    <text evidence="1">Plays a key role in glucose metabolism and homeostasis. Regulates blood glucose by increasing gluconeogenesis and decreasing glycolysis.</text>
</comment>
<comment type="subcellular location">
    <subcellularLocation>
        <location>Secreted</location>
    </subcellularLocation>
</comment>
<comment type="induction">
    <text>Produced in the A cells of the islets of Langerhans in response to a drop in blood sugar concentration.</text>
</comment>
<comment type="miscellaneous">
    <text>X's in the sequence were included by homology with American goosefish sequences.</text>
</comment>
<comment type="similarity">
    <text evidence="4">Belongs to the glucagon family.</text>
</comment>
<proteinExistence type="evidence at protein level"/>
<reference key="1">
    <citation type="journal article" date="1987" name="Eur. J. Biochem.">
        <title>Primary structures of three fragments of proglucagon from the pancreatic islets of the daddy Sculpin (Cottus scorpius).</title>
        <authorList>
            <person name="Conlon J.M."/>
            <person name="Falkmer S."/>
            <person name="Thim L."/>
        </authorList>
    </citation>
    <scope>PROTEIN SEQUENCE</scope>
</reference>
<name>GLUC_MYOSC</name>
<dbReference type="PIR" id="A27188">
    <property type="entry name" value="GCFIS"/>
</dbReference>
<dbReference type="GO" id="GO:0005576">
    <property type="term" value="C:extracellular region"/>
    <property type="evidence" value="ECO:0007669"/>
    <property type="project" value="UniProtKB-SubCell"/>
</dbReference>
<dbReference type="GO" id="GO:0031769">
    <property type="term" value="F:glucagon receptor binding"/>
    <property type="evidence" value="ECO:0007669"/>
    <property type="project" value="TreeGrafter"/>
</dbReference>
<dbReference type="GO" id="GO:0005179">
    <property type="term" value="F:hormone activity"/>
    <property type="evidence" value="ECO:0007669"/>
    <property type="project" value="UniProtKB-KW"/>
</dbReference>
<dbReference type="GO" id="GO:0042594">
    <property type="term" value="P:response to starvation"/>
    <property type="evidence" value="ECO:0007669"/>
    <property type="project" value="TreeGrafter"/>
</dbReference>
<dbReference type="Gene3D" id="6.10.250.590">
    <property type="match status" value="2"/>
</dbReference>
<dbReference type="InterPro" id="IPR015550">
    <property type="entry name" value="Glucagon"/>
</dbReference>
<dbReference type="InterPro" id="IPR000532">
    <property type="entry name" value="Glucagon_GIP_secretin_VIP"/>
</dbReference>
<dbReference type="PANTHER" id="PTHR11418">
    <property type="entry name" value="GLUCAGON"/>
    <property type="match status" value="1"/>
</dbReference>
<dbReference type="PANTHER" id="PTHR11418:SF0">
    <property type="entry name" value="PRO-GLUCAGON"/>
    <property type="match status" value="1"/>
</dbReference>
<dbReference type="Pfam" id="PF00123">
    <property type="entry name" value="Hormone_2"/>
    <property type="match status" value="2"/>
</dbReference>
<dbReference type="PRINTS" id="PR00275">
    <property type="entry name" value="GLUCAGON"/>
</dbReference>
<dbReference type="SMART" id="SM00070">
    <property type="entry name" value="GLUCA"/>
    <property type="match status" value="2"/>
</dbReference>
<dbReference type="PROSITE" id="PS00260">
    <property type="entry name" value="GLUCAGON"/>
    <property type="match status" value="2"/>
</dbReference>
<evidence type="ECO:0000250" key="1">
    <source>
        <dbReference type="UniProtKB" id="P01275"/>
    </source>
</evidence>
<evidence type="ECO:0000256" key="2">
    <source>
        <dbReference type="SAM" id="MobiDB-lite"/>
    </source>
</evidence>
<evidence type="ECO:0000269" key="3">
    <source>
    </source>
</evidence>
<evidence type="ECO:0000305" key="4"/>
<keyword id="KW-0165">Cleavage on pair of basic residues</keyword>
<keyword id="KW-0903">Direct protein sequencing</keyword>
<keyword id="KW-0372">Hormone</keyword>
<keyword id="KW-0964">Secreted</keyword>
<feature type="peptide" id="PRO_0000011352" description="Glicentin-related polypeptide" evidence="3">
    <location>
        <begin position="1"/>
        <end position="26"/>
    </location>
</feature>
<feature type="peptide" id="PRO_0000011353" description="Glucagon" evidence="3">
    <location>
        <begin position="29"/>
        <end position="57"/>
    </location>
</feature>
<feature type="peptide" id="PRO_0000011354" description="Glucagon-like peptide" evidence="3">
    <location>
        <begin position="66"/>
        <end position="96"/>
    </location>
</feature>
<feature type="region of interest" description="Disordered" evidence="2">
    <location>
        <begin position="1"/>
        <end position="35"/>
    </location>
</feature>
<feature type="compositionally biased region" description="Basic and acidic residues" evidence="2">
    <location>
        <begin position="1"/>
        <end position="12"/>
    </location>
</feature>
<feature type="compositionally biased region" description="Basic and acidic residues" evidence="2">
    <location>
        <begin position="19"/>
        <end position="30"/>
    </location>
</feature>
<feature type="non-terminal residue">
    <location>
        <position position="1"/>
    </location>
</feature>
<feature type="non-terminal residue">
    <location>
        <position position="96"/>
    </location>
</feature>